<evidence type="ECO:0000255" key="1">
    <source>
        <dbReference type="HAMAP-Rule" id="MF_01306"/>
    </source>
</evidence>
<evidence type="ECO:0000305" key="2"/>
<proteinExistence type="inferred from homology"/>
<sequence>MARYLGPKCKLSRREGTDLFLKSGVKANDEKCKMNTAPGQHGARRARLSDYGLQLRERQKVRRMYGILEGQFKKYYVEASRRKGNTGATLLELLESRLDNVVYRMGFAATRAEARQLVVHKGIMVNGHTCNVPSAQVKAGDVVAVREKAKKQLRIQNAVELAKHRKELSWIDVNTDSLEGTMKSSPDRSELSADINEQLIIELYSK</sequence>
<gene>
    <name evidence="1" type="primary">rpsD</name>
    <name type="ordered locus">FTM_1503</name>
</gene>
<dbReference type="EMBL" id="CP000915">
    <property type="protein sequence ID" value="ACD31325.1"/>
    <property type="molecule type" value="Genomic_DNA"/>
</dbReference>
<dbReference type="SMR" id="B2SDW1"/>
<dbReference type="KEGG" id="ftm:FTM_1503"/>
<dbReference type="HOGENOM" id="CLU_092403_0_2_6"/>
<dbReference type="GO" id="GO:0015935">
    <property type="term" value="C:small ribosomal subunit"/>
    <property type="evidence" value="ECO:0007669"/>
    <property type="project" value="InterPro"/>
</dbReference>
<dbReference type="GO" id="GO:0019843">
    <property type="term" value="F:rRNA binding"/>
    <property type="evidence" value="ECO:0007669"/>
    <property type="project" value="UniProtKB-UniRule"/>
</dbReference>
<dbReference type="GO" id="GO:0003735">
    <property type="term" value="F:structural constituent of ribosome"/>
    <property type="evidence" value="ECO:0007669"/>
    <property type="project" value="InterPro"/>
</dbReference>
<dbReference type="GO" id="GO:0042274">
    <property type="term" value="P:ribosomal small subunit biogenesis"/>
    <property type="evidence" value="ECO:0007669"/>
    <property type="project" value="TreeGrafter"/>
</dbReference>
<dbReference type="GO" id="GO:0006412">
    <property type="term" value="P:translation"/>
    <property type="evidence" value="ECO:0007669"/>
    <property type="project" value="UniProtKB-UniRule"/>
</dbReference>
<dbReference type="CDD" id="cd00165">
    <property type="entry name" value="S4"/>
    <property type="match status" value="1"/>
</dbReference>
<dbReference type="FunFam" id="1.10.1050.10:FF:000001">
    <property type="entry name" value="30S ribosomal protein S4"/>
    <property type="match status" value="1"/>
</dbReference>
<dbReference type="FunFam" id="3.10.290.10:FF:000001">
    <property type="entry name" value="30S ribosomal protein S4"/>
    <property type="match status" value="1"/>
</dbReference>
<dbReference type="Gene3D" id="1.10.1050.10">
    <property type="entry name" value="Ribosomal Protein S4 Delta 41, Chain A, domain 1"/>
    <property type="match status" value="1"/>
</dbReference>
<dbReference type="Gene3D" id="3.10.290.10">
    <property type="entry name" value="RNA-binding S4 domain"/>
    <property type="match status" value="1"/>
</dbReference>
<dbReference type="HAMAP" id="MF_01306_B">
    <property type="entry name" value="Ribosomal_uS4_B"/>
    <property type="match status" value="1"/>
</dbReference>
<dbReference type="InterPro" id="IPR022801">
    <property type="entry name" value="Ribosomal_uS4"/>
</dbReference>
<dbReference type="InterPro" id="IPR005709">
    <property type="entry name" value="Ribosomal_uS4_bac-type"/>
</dbReference>
<dbReference type="InterPro" id="IPR018079">
    <property type="entry name" value="Ribosomal_uS4_CS"/>
</dbReference>
<dbReference type="InterPro" id="IPR001912">
    <property type="entry name" value="Ribosomal_uS4_N"/>
</dbReference>
<dbReference type="InterPro" id="IPR002942">
    <property type="entry name" value="S4_RNA-bd"/>
</dbReference>
<dbReference type="InterPro" id="IPR036986">
    <property type="entry name" value="S4_RNA-bd_sf"/>
</dbReference>
<dbReference type="NCBIfam" id="NF003717">
    <property type="entry name" value="PRK05327.1"/>
    <property type="match status" value="1"/>
</dbReference>
<dbReference type="NCBIfam" id="TIGR01017">
    <property type="entry name" value="rpsD_bact"/>
    <property type="match status" value="1"/>
</dbReference>
<dbReference type="PANTHER" id="PTHR11831">
    <property type="entry name" value="30S 40S RIBOSOMAL PROTEIN"/>
    <property type="match status" value="1"/>
</dbReference>
<dbReference type="PANTHER" id="PTHR11831:SF4">
    <property type="entry name" value="SMALL RIBOSOMAL SUBUNIT PROTEIN US4M"/>
    <property type="match status" value="1"/>
</dbReference>
<dbReference type="Pfam" id="PF00163">
    <property type="entry name" value="Ribosomal_S4"/>
    <property type="match status" value="1"/>
</dbReference>
<dbReference type="Pfam" id="PF01479">
    <property type="entry name" value="S4"/>
    <property type="match status" value="1"/>
</dbReference>
<dbReference type="SMART" id="SM01390">
    <property type="entry name" value="Ribosomal_S4"/>
    <property type="match status" value="1"/>
</dbReference>
<dbReference type="SMART" id="SM00363">
    <property type="entry name" value="S4"/>
    <property type="match status" value="1"/>
</dbReference>
<dbReference type="SUPFAM" id="SSF55174">
    <property type="entry name" value="Alpha-L RNA-binding motif"/>
    <property type="match status" value="1"/>
</dbReference>
<dbReference type="PROSITE" id="PS00632">
    <property type="entry name" value="RIBOSOMAL_S4"/>
    <property type="match status" value="1"/>
</dbReference>
<dbReference type="PROSITE" id="PS50889">
    <property type="entry name" value="S4"/>
    <property type="match status" value="1"/>
</dbReference>
<keyword id="KW-0687">Ribonucleoprotein</keyword>
<keyword id="KW-0689">Ribosomal protein</keyword>
<keyword id="KW-0694">RNA-binding</keyword>
<keyword id="KW-0699">rRNA-binding</keyword>
<comment type="function">
    <text evidence="1">One of the primary rRNA binding proteins, it binds directly to 16S rRNA where it nucleates assembly of the body of the 30S subunit.</text>
</comment>
<comment type="function">
    <text evidence="1">With S5 and S12 plays an important role in translational accuracy.</text>
</comment>
<comment type="subunit">
    <text evidence="1">Part of the 30S ribosomal subunit. Contacts protein S5. The interaction surface between S4 and S5 is involved in control of translational fidelity.</text>
</comment>
<comment type="similarity">
    <text evidence="1">Belongs to the universal ribosomal protein uS4 family.</text>
</comment>
<accession>B2SDW1</accession>
<organism>
    <name type="scientific">Francisella tularensis subsp. mediasiatica (strain FSC147)</name>
    <dbReference type="NCBI Taxonomy" id="441952"/>
    <lineage>
        <taxon>Bacteria</taxon>
        <taxon>Pseudomonadati</taxon>
        <taxon>Pseudomonadota</taxon>
        <taxon>Gammaproteobacteria</taxon>
        <taxon>Thiotrichales</taxon>
        <taxon>Francisellaceae</taxon>
        <taxon>Francisella</taxon>
    </lineage>
</organism>
<reference key="1">
    <citation type="journal article" date="2009" name="PLoS Pathog.">
        <title>Molecular evolutionary consequences of niche restriction in Francisella tularensis, a facultative intracellular pathogen.</title>
        <authorList>
            <person name="Larsson P."/>
            <person name="Elfsmark D."/>
            <person name="Svensson K."/>
            <person name="Wikstroem P."/>
            <person name="Forsman M."/>
            <person name="Brettin T."/>
            <person name="Keim P."/>
            <person name="Johansson A."/>
        </authorList>
    </citation>
    <scope>NUCLEOTIDE SEQUENCE [LARGE SCALE GENOMIC DNA]</scope>
    <source>
        <strain>FSC147</strain>
    </source>
</reference>
<name>RS4_FRATM</name>
<protein>
    <recommendedName>
        <fullName evidence="1">Small ribosomal subunit protein uS4</fullName>
    </recommendedName>
    <alternativeName>
        <fullName evidence="2">30S ribosomal protein S4</fullName>
    </alternativeName>
</protein>
<feature type="chain" id="PRO_1000140737" description="Small ribosomal subunit protein uS4">
    <location>
        <begin position="1"/>
        <end position="206"/>
    </location>
</feature>
<feature type="domain" description="S4 RNA-binding" evidence="1">
    <location>
        <begin position="96"/>
        <end position="158"/>
    </location>
</feature>